<protein>
    <recommendedName>
        <fullName evidence="1">Biotin synthase</fullName>
        <ecNumber evidence="1">2.8.1.6</ecNumber>
    </recommendedName>
</protein>
<reference key="1">
    <citation type="submission" date="2008-02" db="EMBL/GenBank/DDBJ databases">
        <title>Complete sequence of chromosome of Methylobacterium sp. 4-46.</title>
        <authorList>
            <consortium name="US DOE Joint Genome Institute"/>
            <person name="Copeland A."/>
            <person name="Lucas S."/>
            <person name="Lapidus A."/>
            <person name="Glavina del Rio T."/>
            <person name="Dalin E."/>
            <person name="Tice H."/>
            <person name="Bruce D."/>
            <person name="Goodwin L."/>
            <person name="Pitluck S."/>
            <person name="Chertkov O."/>
            <person name="Brettin T."/>
            <person name="Detter J.C."/>
            <person name="Han C."/>
            <person name="Kuske C.R."/>
            <person name="Schmutz J."/>
            <person name="Larimer F."/>
            <person name="Land M."/>
            <person name="Hauser L."/>
            <person name="Kyrpides N."/>
            <person name="Ivanova N."/>
            <person name="Marx C.J."/>
            <person name="Richardson P."/>
        </authorList>
    </citation>
    <scope>NUCLEOTIDE SEQUENCE [LARGE SCALE GENOMIC DNA]</scope>
    <source>
        <strain>4-46</strain>
    </source>
</reference>
<accession>B0U811</accession>
<dbReference type="EC" id="2.8.1.6" evidence="1"/>
<dbReference type="EMBL" id="CP000943">
    <property type="protein sequence ID" value="ACA19727.1"/>
    <property type="molecule type" value="Genomic_DNA"/>
</dbReference>
<dbReference type="RefSeq" id="WP_012335112.1">
    <property type="nucleotide sequence ID" value="NC_010511.1"/>
</dbReference>
<dbReference type="SMR" id="B0U811"/>
<dbReference type="STRING" id="426117.M446_5411"/>
<dbReference type="KEGG" id="met:M446_5411"/>
<dbReference type="eggNOG" id="COG0502">
    <property type="taxonomic scope" value="Bacteria"/>
</dbReference>
<dbReference type="HOGENOM" id="CLU_033172_1_2_5"/>
<dbReference type="UniPathway" id="UPA00078">
    <property type="reaction ID" value="UER00162"/>
</dbReference>
<dbReference type="GO" id="GO:0051537">
    <property type="term" value="F:2 iron, 2 sulfur cluster binding"/>
    <property type="evidence" value="ECO:0007669"/>
    <property type="project" value="UniProtKB-KW"/>
</dbReference>
<dbReference type="GO" id="GO:0051539">
    <property type="term" value="F:4 iron, 4 sulfur cluster binding"/>
    <property type="evidence" value="ECO:0007669"/>
    <property type="project" value="UniProtKB-KW"/>
</dbReference>
<dbReference type="GO" id="GO:0004076">
    <property type="term" value="F:biotin synthase activity"/>
    <property type="evidence" value="ECO:0007669"/>
    <property type="project" value="UniProtKB-UniRule"/>
</dbReference>
<dbReference type="GO" id="GO:0005506">
    <property type="term" value="F:iron ion binding"/>
    <property type="evidence" value="ECO:0007669"/>
    <property type="project" value="UniProtKB-UniRule"/>
</dbReference>
<dbReference type="GO" id="GO:0009102">
    <property type="term" value="P:biotin biosynthetic process"/>
    <property type="evidence" value="ECO:0007669"/>
    <property type="project" value="UniProtKB-UniRule"/>
</dbReference>
<dbReference type="CDD" id="cd01335">
    <property type="entry name" value="Radical_SAM"/>
    <property type="match status" value="1"/>
</dbReference>
<dbReference type="Gene3D" id="3.20.20.70">
    <property type="entry name" value="Aldolase class I"/>
    <property type="match status" value="1"/>
</dbReference>
<dbReference type="HAMAP" id="MF_01694">
    <property type="entry name" value="BioB"/>
    <property type="match status" value="1"/>
</dbReference>
<dbReference type="InterPro" id="IPR013785">
    <property type="entry name" value="Aldolase_TIM"/>
</dbReference>
<dbReference type="InterPro" id="IPR010722">
    <property type="entry name" value="BATS_dom"/>
</dbReference>
<dbReference type="InterPro" id="IPR002684">
    <property type="entry name" value="Biotin_synth/BioAB"/>
</dbReference>
<dbReference type="InterPro" id="IPR024177">
    <property type="entry name" value="Biotin_synthase"/>
</dbReference>
<dbReference type="InterPro" id="IPR006638">
    <property type="entry name" value="Elp3/MiaA/NifB-like_rSAM"/>
</dbReference>
<dbReference type="InterPro" id="IPR007197">
    <property type="entry name" value="rSAM"/>
</dbReference>
<dbReference type="NCBIfam" id="TIGR00433">
    <property type="entry name" value="bioB"/>
    <property type="match status" value="1"/>
</dbReference>
<dbReference type="PANTHER" id="PTHR22976">
    <property type="entry name" value="BIOTIN SYNTHASE"/>
    <property type="match status" value="1"/>
</dbReference>
<dbReference type="PANTHER" id="PTHR22976:SF2">
    <property type="entry name" value="BIOTIN SYNTHASE, MITOCHONDRIAL"/>
    <property type="match status" value="1"/>
</dbReference>
<dbReference type="Pfam" id="PF06968">
    <property type="entry name" value="BATS"/>
    <property type="match status" value="1"/>
</dbReference>
<dbReference type="Pfam" id="PF04055">
    <property type="entry name" value="Radical_SAM"/>
    <property type="match status" value="1"/>
</dbReference>
<dbReference type="PIRSF" id="PIRSF001619">
    <property type="entry name" value="Biotin_synth"/>
    <property type="match status" value="1"/>
</dbReference>
<dbReference type="SFLD" id="SFLDF00272">
    <property type="entry name" value="biotin_synthase"/>
    <property type="match status" value="1"/>
</dbReference>
<dbReference type="SFLD" id="SFLDG01278">
    <property type="entry name" value="biotin_synthase_like"/>
    <property type="match status" value="1"/>
</dbReference>
<dbReference type="SMART" id="SM00876">
    <property type="entry name" value="BATS"/>
    <property type="match status" value="1"/>
</dbReference>
<dbReference type="SMART" id="SM00729">
    <property type="entry name" value="Elp3"/>
    <property type="match status" value="1"/>
</dbReference>
<dbReference type="SUPFAM" id="SSF102114">
    <property type="entry name" value="Radical SAM enzymes"/>
    <property type="match status" value="1"/>
</dbReference>
<dbReference type="PROSITE" id="PS51918">
    <property type="entry name" value="RADICAL_SAM"/>
    <property type="match status" value="1"/>
</dbReference>
<feature type="chain" id="PRO_0000381471" description="Biotin synthase">
    <location>
        <begin position="1"/>
        <end position="332"/>
    </location>
</feature>
<feature type="domain" description="Radical SAM core" evidence="2">
    <location>
        <begin position="46"/>
        <end position="275"/>
    </location>
</feature>
<feature type="binding site" evidence="1">
    <location>
        <position position="61"/>
    </location>
    <ligand>
        <name>[4Fe-4S] cluster</name>
        <dbReference type="ChEBI" id="CHEBI:49883"/>
        <note>4Fe-4S-S-AdoMet</note>
    </ligand>
</feature>
<feature type="binding site" evidence="1">
    <location>
        <position position="65"/>
    </location>
    <ligand>
        <name>[4Fe-4S] cluster</name>
        <dbReference type="ChEBI" id="CHEBI:49883"/>
        <note>4Fe-4S-S-AdoMet</note>
    </ligand>
</feature>
<feature type="binding site" evidence="1">
    <location>
        <position position="68"/>
    </location>
    <ligand>
        <name>[4Fe-4S] cluster</name>
        <dbReference type="ChEBI" id="CHEBI:49883"/>
        <note>4Fe-4S-S-AdoMet</note>
    </ligand>
</feature>
<feature type="binding site" evidence="1">
    <location>
        <position position="106"/>
    </location>
    <ligand>
        <name>[2Fe-2S] cluster</name>
        <dbReference type="ChEBI" id="CHEBI:190135"/>
    </ligand>
</feature>
<feature type="binding site" evidence="1">
    <location>
        <position position="138"/>
    </location>
    <ligand>
        <name>[2Fe-2S] cluster</name>
        <dbReference type="ChEBI" id="CHEBI:190135"/>
    </ligand>
</feature>
<feature type="binding site" evidence="1">
    <location>
        <position position="198"/>
    </location>
    <ligand>
        <name>[2Fe-2S] cluster</name>
        <dbReference type="ChEBI" id="CHEBI:190135"/>
    </ligand>
</feature>
<feature type="binding site" evidence="1">
    <location>
        <position position="270"/>
    </location>
    <ligand>
        <name>[2Fe-2S] cluster</name>
        <dbReference type="ChEBI" id="CHEBI:190135"/>
    </ligand>
</feature>
<evidence type="ECO:0000255" key="1">
    <source>
        <dbReference type="HAMAP-Rule" id="MF_01694"/>
    </source>
</evidence>
<evidence type="ECO:0000255" key="2">
    <source>
        <dbReference type="PROSITE-ProRule" id="PRU01266"/>
    </source>
</evidence>
<name>BIOB_METS4</name>
<gene>
    <name evidence="1" type="primary">bioB</name>
    <name type="ordered locus">M446_5411</name>
</gene>
<sequence>MTTTERSDPAIRHDWTVAQVQAIHDMPLLDLVHRASLVHRAHHDPSDIQRASLLSIKTGGCPEDCGYCSQSAHHKETGVARQRLMPVEAVLREAAAAKAAGATRFCMGAAWRSPKDGPDFDAVLAMVRGVRGLGMEACVTLGMLTPSQAERLAEAGLTAYNHNLDTGPDYYDKIVSTRSYEDRLATLQAVRDAGIGVCCGGIIGMGEGVTDRVAMLQVLANHAPHPESVPINALAAVPGTPLGERPPVDPFEMVRMCATARIVMPRARVRLSAGRRALSREAQVLCFLAGANSIFYGERLLTTANTDADADAQLLRDIGVPVPAISALEAAE</sequence>
<comment type="function">
    <text evidence="1">Catalyzes the conversion of dethiobiotin (DTB) to biotin by the insertion of a sulfur atom into dethiobiotin via a radical-based mechanism.</text>
</comment>
<comment type="catalytic activity">
    <reaction evidence="1">
        <text>(4R,5S)-dethiobiotin + (sulfur carrier)-SH + 2 reduced [2Fe-2S]-[ferredoxin] + 2 S-adenosyl-L-methionine = (sulfur carrier)-H + biotin + 2 5'-deoxyadenosine + 2 L-methionine + 2 oxidized [2Fe-2S]-[ferredoxin]</text>
        <dbReference type="Rhea" id="RHEA:22060"/>
        <dbReference type="Rhea" id="RHEA-COMP:10000"/>
        <dbReference type="Rhea" id="RHEA-COMP:10001"/>
        <dbReference type="Rhea" id="RHEA-COMP:14737"/>
        <dbReference type="Rhea" id="RHEA-COMP:14739"/>
        <dbReference type="ChEBI" id="CHEBI:17319"/>
        <dbReference type="ChEBI" id="CHEBI:29917"/>
        <dbReference type="ChEBI" id="CHEBI:33737"/>
        <dbReference type="ChEBI" id="CHEBI:33738"/>
        <dbReference type="ChEBI" id="CHEBI:57586"/>
        <dbReference type="ChEBI" id="CHEBI:57844"/>
        <dbReference type="ChEBI" id="CHEBI:59789"/>
        <dbReference type="ChEBI" id="CHEBI:64428"/>
        <dbReference type="ChEBI" id="CHEBI:149473"/>
        <dbReference type="EC" id="2.8.1.6"/>
    </reaction>
</comment>
<comment type="cofactor">
    <cofactor evidence="1">
        <name>[4Fe-4S] cluster</name>
        <dbReference type="ChEBI" id="CHEBI:49883"/>
    </cofactor>
    <text evidence="1">Binds 1 [4Fe-4S] cluster. The cluster is coordinated with 3 cysteines and an exchangeable S-adenosyl-L-methionine.</text>
</comment>
<comment type="cofactor">
    <cofactor evidence="1">
        <name>[2Fe-2S] cluster</name>
        <dbReference type="ChEBI" id="CHEBI:190135"/>
    </cofactor>
    <text evidence="1">Binds 1 [2Fe-2S] cluster. The cluster is coordinated with 3 cysteines and 1 arginine.</text>
</comment>
<comment type="pathway">
    <text evidence="1">Cofactor biosynthesis; biotin biosynthesis; biotin from 7,8-diaminononanoate: step 2/2.</text>
</comment>
<comment type="subunit">
    <text evidence="1">Homodimer.</text>
</comment>
<comment type="similarity">
    <text evidence="1">Belongs to the radical SAM superfamily. Biotin synthase family.</text>
</comment>
<organism>
    <name type="scientific">Methylobacterium sp. (strain 4-46)</name>
    <dbReference type="NCBI Taxonomy" id="426117"/>
    <lineage>
        <taxon>Bacteria</taxon>
        <taxon>Pseudomonadati</taxon>
        <taxon>Pseudomonadota</taxon>
        <taxon>Alphaproteobacteria</taxon>
        <taxon>Hyphomicrobiales</taxon>
        <taxon>Methylobacteriaceae</taxon>
        <taxon>Methylobacterium</taxon>
    </lineage>
</organism>
<keyword id="KW-0001">2Fe-2S</keyword>
<keyword id="KW-0004">4Fe-4S</keyword>
<keyword id="KW-0093">Biotin biosynthesis</keyword>
<keyword id="KW-0408">Iron</keyword>
<keyword id="KW-0411">Iron-sulfur</keyword>
<keyword id="KW-0479">Metal-binding</keyword>
<keyword id="KW-0949">S-adenosyl-L-methionine</keyword>
<keyword id="KW-0808">Transferase</keyword>
<proteinExistence type="inferred from homology"/>